<organism>
    <name type="scientific">Bacteroides thetaiotaomicron (strain ATCC 29148 / DSM 2079 / JCM 5827 / CCUG 10774 / NCTC 10582 / VPI-5482 / E50)</name>
    <dbReference type="NCBI Taxonomy" id="226186"/>
    <lineage>
        <taxon>Bacteria</taxon>
        <taxon>Pseudomonadati</taxon>
        <taxon>Bacteroidota</taxon>
        <taxon>Bacteroidia</taxon>
        <taxon>Bacteroidales</taxon>
        <taxon>Bacteroidaceae</taxon>
        <taxon>Bacteroides</taxon>
    </lineage>
</organism>
<keyword id="KW-0520">NAD</keyword>
<keyword id="KW-0521">NADP</keyword>
<keyword id="KW-0560">Oxidoreductase</keyword>
<keyword id="KW-1185">Reference proteome</keyword>
<proteinExistence type="inferred from homology"/>
<dbReference type="EC" id="1.4.1.3"/>
<dbReference type="EMBL" id="U82241">
    <property type="protein sequence ID" value="AAB40143.1"/>
    <property type="status" value="ALT_INIT"/>
    <property type="molecule type" value="Genomic_DNA"/>
</dbReference>
<dbReference type="EMBL" id="AE015928">
    <property type="protein sequence ID" value="AAO77077.1"/>
    <property type="molecule type" value="Genomic_DNA"/>
</dbReference>
<dbReference type="RefSeq" id="NP_810883.1">
    <property type="nucleotide sequence ID" value="NC_004663.1"/>
</dbReference>
<dbReference type="RefSeq" id="WP_011108072.1">
    <property type="nucleotide sequence ID" value="NC_004663.1"/>
</dbReference>
<dbReference type="SMR" id="P94598"/>
<dbReference type="FunCoup" id="P94598">
    <property type="interactions" value="434"/>
</dbReference>
<dbReference type="STRING" id="226186.BT_1970"/>
<dbReference type="PaxDb" id="226186-BT_1970"/>
<dbReference type="EnsemblBacteria" id="AAO77077">
    <property type="protein sequence ID" value="AAO77077"/>
    <property type="gene ID" value="BT_1970"/>
</dbReference>
<dbReference type="GeneID" id="60927954"/>
<dbReference type="KEGG" id="bth:BT_1970"/>
<dbReference type="PATRIC" id="fig|226186.12.peg.2018"/>
<dbReference type="eggNOG" id="COG0334">
    <property type="taxonomic scope" value="Bacteria"/>
</dbReference>
<dbReference type="HOGENOM" id="CLU_025763_2_1_10"/>
<dbReference type="InParanoid" id="P94598"/>
<dbReference type="OrthoDB" id="9803297at2"/>
<dbReference type="Proteomes" id="UP000001414">
    <property type="component" value="Chromosome"/>
</dbReference>
<dbReference type="GO" id="GO:0005829">
    <property type="term" value="C:cytosol"/>
    <property type="evidence" value="ECO:0000318"/>
    <property type="project" value="GO_Central"/>
</dbReference>
<dbReference type="GO" id="GO:0004352">
    <property type="term" value="F:glutamate dehydrogenase (NAD+) activity"/>
    <property type="evidence" value="ECO:0007669"/>
    <property type="project" value="RHEA"/>
</dbReference>
<dbReference type="GO" id="GO:0004354">
    <property type="term" value="F:glutamate dehydrogenase (NADP+) activity"/>
    <property type="evidence" value="ECO:0000318"/>
    <property type="project" value="GO_Central"/>
</dbReference>
<dbReference type="GO" id="GO:0006537">
    <property type="term" value="P:glutamate biosynthetic process"/>
    <property type="evidence" value="ECO:0000318"/>
    <property type="project" value="GO_Central"/>
</dbReference>
<dbReference type="CDD" id="cd05313">
    <property type="entry name" value="NAD_bind_2_Glu_DH"/>
    <property type="match status" value="1"/>
</dbReference>
<dbReference type="FunFam" id="1.10.285.10:FF:000001">
    <property type="entry name" value="Glutamate dehydrogenase"/>
    <property type="match status" value="1"/>
</dbReference>
<dbReference type="FunFam" id="1.10.285.10:FF:000004">
    <property type="entry name" value="Glutamate dehydrogenase"/>
    <property type="match status" value="1"/>
</dbReference>
<dbReference type="FunFam" id="3.40.50.10860:FF:000002">
    <property type="entry name" value="Glutamate dehydrogenase"/>
    <property type="match status" value="1"/>
</dbReference>
<dbReference type="FunFam" id="3.40.50.720:FF:000030">
    <property type="entry name" value="Glutamate dehydrogenase"/>
    <property type="match status" value="1"/>
</dbReference>
<dbReference type="Gene3D" id="1.10.285.10">
    <property type="entry name" value="Glutamate Dehydrogenase, chain A, domain 3"/>
    <property type="match status" value="2"/>
</dbReference>
<dbReference type="Gene3D" id="3.40.50.10860">
    <property type="entry name" value="Leucine Dehydrogenase, chain A, domain 1"/>
    <property type="match status" value="1"/>
</dbReference>
<dbReference type="Gene3D" id="3.40.50.720">
    <property type="entry name" value="NAD(P)-binding Rossmann-like Domain"/>
    <property type="match status" value="1"/>
</dbReference>
<dbReference type="InterPro" id="IPR046346">
    <property type="entry name" value="Aminoacid_DH-like_N_sf"/>
</dbReference>
<dbReference type="InterPro" id="IPR006095">
    <property type="entry name" value="Glu/Leu/Phe/Val/Trp_DH"/>
</dbReference>
<dbReference type="InterPro" id="IPR006096">
    <property type="entry name" value="Glu/Leu/Phe/Val/Trp_DH_C"/>
</dbReference>
<dbReference type="InterPro" id="IPR006097">
    <property type="entry name" value="Glu/Leu/Phe/Val/Trp_DH_dimer"/>
</dbReference>
<dbReference type="InterPro" id="IPR033524">
    <property type="entry name" value="Glu/Leu/Phe/Val_DH_AS"/>
</dbReference>
<dbReference type="InterPro" id="IPR014362">
    <property type="entry name" value="Glu_DH"/>
</dbReference>
<dbReference type="InterPro" id="IPR050724">
    <property type="entry name" value="Glu_Leu_Phe_Val_DH"/>
</dbReference>
<dbReference type="InterPro" id="IPR036291">
    <property type="entry name" value="NAD(P)-bd_dom_sf"/>
</dbReference>
<dbReference type="InterPro" id="IPR033922">
    <property type="entry name" value="NAD_bind_Glu_DH"/>
</dbReference>
<dbReference type="NCBIfam" id="NF006929">
    <property type="entry name" value="PRK09414.1"/>
    <property type="match status" value="1"/>
</dbReference>
<dbReference type="NCBIfam" id="NF010633">
    <property type="entry name" value="PRK14030.1"/>
    <property type="match status" value="1"/>
</dbReference>
<dbReference type="NCBIfam" id="NF010634">
    <property type="entry name" value="PRK14031.1"/>
    <property type="match status" value="1"/>
</dbReference>
<dbReference type="PANTHER" id="PTHR43571">
    <property type="entry name" value="NADP-SPECIFIC GLUTAMATE DEHYDROGENASE 1-RELATED"/>
    <property type="match status" value="1"/>
</dbReference>
<dbReference type="PANTHER" id="PTHR43571:SF1">
    <property type="entry name" value="NADP-SPECIFIC GLUTAMATE DEHYDROGENASE 1-RELATED"/>
    <property type="match status" value="1"/>
</dbReference>
<dbReference type="Pfam" id="PF00208">
    <property type="entry name" value="ELFV_dehydrog"/>
    <property type="match status" value="1"/>
</dbReference>
<dbReference type="Pfam" id="PF02812">
    <property type="entry name" value="ELFV_dehydrog_N"/>
    <property type="match status" value="1"/>
</dbReference>
<dbReference type="PIRSF" id="PIRSF000185">
    <property type="entry name" value="Glu_DH"/>
    <property type="match status" value="1"/>
</dbReference>
<dbReference type="PRINTS" id="PR00082">
    <property type="entry name" value="GLFDHDRGNASE"/>
</dbReference>
<dbReference type="SMART" id="SM00839">
    <property type="entry name" value="ELFV_dehydrog"/>
    <property type="match status" value="1"/>
</dbReference>
<dbReference type="SUPFAM" id="SSF53223">
    <property type="entry name" value="Aminoacid dehydrogenase-like, N-terminal domain"/>
    <property type="match status" value="1"/>
</dbReference>
<dbReference type="SUPFAM" id="SSF51735">
    <property type="entry name" value="NAD(P)-binding Rossmann-fold domains"/>
    <property type="match status" value="1"/>
</dbReference>
<dbReference type="PROSITE" id="PS00074">
    <property type="entry name" value="GLFV_DEHYDROGENASE"/>
    <property type="match status" value="1"/>
</dbReference>
<accession>P94598</accession>
<protein>
    <recommendedName>
        <fullName>Glutamate dehydrogenase</fullName>
        <shortName>GDH</shortName>
        <ecNumber>1.4.1.3</ecNumber>
    </recommendedName>
    <alternativeName>
        <fullName>NAD(P)H-utilizing glutamate dehydrogenase</fullName>
    </alternativeName>
</protein>
<feature type="chain" id="PRO_0000182766" description="Glutamate dehydrogenase">
    <location>
        <begin position="1"/>
        <end position="444"/>
    </location>
</feature>
<feature type="active site" evidence="2">
    <location>
        <position position="124"/>
    </location>
</feature>
<comment type="catalytic activity">
    <reaction evidence="2">
        <text>L-glutamate + NAD(+) + H2O = 2-oxoglutarate + NH4(+) + NADH + H(+)</text>
        <dbReference type="Rhea" id="RHEA:15133"/>
        <dbReference type="ChEBI" id="CHEBI:15377"/>
        <dbReference type="ChEBI" id="CHEBI:15378"/>
        <dbReference type="ChEBI" id="CHEBI:16810"/>
        <dbReference type="ChEBI" id="CHEBI:28938"/>
        <dbReference type="ChEBI" id="CHEBI:29985"/>
        <dbReference type="ChEBI" id="CHEBI:57540"/>
        <dbReference type="ChEBI" id="CHEBI:57945"/>
        <dbReference type="EC" id="1.4.1.3"/>
    </reaction>
</comment>
<comment type="catalytic activity">
    <reaction evidence="2">
        <text>L-glutamate + NADP(+) + H2O = 2-oxoglutarate + NH4(+) + NADPH + H(+)</text>
        <dbReference type="Rhea" id="RHEA:11612"/>
        <dbReference type="ChEBI" id="CHEBI:15377"/>
        <dbReference type="ChEBI" id="CHEBI:15378"/>
        <dbReference type="ChEBI" id="CHEBI:16810"/>
        <dbReference type="ChEBI" id="CHEBI:28938"/>
        <dbReference type="ChEBI" id="CHEBI:29985"/>
        <dbReference type="ChEBI" id="CHEBI:57783"/>
        <dbReference type="ChEBI" id="CHEBI:58349"/>
        <dbReference type="EC" id="1.4.1.3"/>
    </reaction>
</comment>
<comment type="subunit">
    <text evidence="1">Homohexamer.</text>
</comment>
<comment type="similarity">
    <text evidence="3">Belongs to the Glu/Leu/Phe/Val dehydrogenases family.</text>
</comment>
<comment type="sequence caution" evidence="3">
    <conflict type="erroneous initiation">
        <sequence resource="EMBL-CDS" id="AAB40143"/>
    </conflict>
</comment>
<reference key="1">
    <citation type="journal article" date="1996" name="J. Bacteriol.">
        <title>The NAD(P)H-utilizing glutamate dehydrogenase of Bacteroides thetaiotaomicron belongs to enzyme family I, and its activity is affected by trans-acting gene(s) positioned downstream of gdhA.</title>
        <authorList>
            <person name="Baggio L."/>
            <person name="Morrison M."/>
        </authorList>
    </citation>
    <scope>NUCLEOTIDE SEQUENCE [GENOMIC DNA]</scope>
    <source>
        <strain>ATCC 29148 / DSM 2079 / JCM 5827 / CCUG 10774 / NCTC 10582 / VPI-5482 / E50</strain>
    </source>
</reference>
<reference key="2">
    <citation type="journal article" date="2003" name="Science">
        <title>A genomic view of the human-Bacteroides thetaiotaomicron symbiosis.</title>
        <authorList>
            <person name="Xu J."/>
            <person name="Bjursell M.K."/>
            <person name="Himrod J."/>
            <person name="Deng S."/>
            <person name="Carmichael L.K."/>
            <person name="Chiang H.C."/>
            <person name="Hooper L.V."/>
            <person name="Gordon J.I."/>
        </authorList>
    </citation>
    <scope>NUCLEOTIDE SEQUENCE [LARGE SCALE GENOMIC DNA]</scope>
    <source>
        <strain>ATCC 29148 / DSM 2079 / JCM 5827 / CCUG 10774 / NCTC 10582 / VPI-5482 / E50</strain>
    </source>
</reference>
<name>DHE3_BACTN</name>
<gene>
    <name type="primary">gdhA</name>
    <name type="ordered locus">BT_1970</name>
</gene>
<sequence>MNAAKVLDDLKRRFPNEPEYHQAVEEVLSTIEEEYNKHPEFDKANLIERLCIPDRVFQFRVTWMDDKGNIQTNMGYRVQHNNAIGPYKGGIRFHASVNLSILKFLAFEQTFKNSLTTLPMGGGKGGSDFSPRGKSNAEVMRFVQAFMLELWRHIGPETDVPAGDIGVGGREVGFMFGMYKKLAHEFTGTFTGKGREFGGSLIRPEATGYGNIYFLMEMLKTKGTDLKGKVCLVSGSGNVAQYTIEKVIELGGKVVTCSDSDGYIYDPDGIDREKLDYIMELKNLYRGRIREYAEKYGCKYVEGAKPWGEKCDIALPSATQNELNGDHARQLVANGCIAVSEGANMPSTPEAVRVFQDAKILYAPGKAANAGGVSVSGLEMTQNSIKLSWSAEEVDEKLKSIMKNIHEACVQYGTEADGYVNYVKGANVAGFMKVAKAMMAQGIV</sequence>
<evidence type="ECO:0000250" key="1"/>
<evidence type="ECO:0000255" key="2">
    <source>
        <dbReference type="PROSITE-ProRule" id="PRU10011"/>
    </source>
</evidence>
<evidence type="ECO:0000305" key="3"/>